<comment type="function">
    <text evidence="1 2">A scaffold on which IscS assembles Fe-S clusters. Cluster assembly on IscU homodimers proceeds sequentially from 1 2Fe-2S per dimer, to 2 2Fe-2S per dimer and finally 1 4Fe-4S per dimer. Subsequently IscU transfers the Fe-S cluster to other acceptor proteins. It is likely that Fe-S cluster coordination is flexible as the role of this complex is to build and then hand off Fe-S clusters. The clusters are very sensitive to O(2).</text>
</comment>
<comment type="subunit">
    <text>Homodimer. Forms a heterotetramer with IscS; each subunit of the IscS dimer contacts an IscU monomer.</text>
</comment>
<comment type="interaction">
    <interactant intactId="EBI-15710405">
        <id>O31270</id>
    </interactant>
    <interactant intactId="EBI-15710417">
        <id>O31269</id>
        <label>iscS</label>
    </interactant>
    <organismsDiffer>false</organismsDiffer>
    <experiments>3</experiments>
</comment>
<comment type="similarity">
    <text evidence="3">Belongs to the NifU family.</text>
</comment>
<reference key="1">
    <citation type="journal article" date="1998" name="J. Biol. Chem.">
        <title>Assembly of iron-sulfur clusters. Identification of an iscSUA-hscBA-fdx gene cluster from Azotobacter vinelandii.</title>
        <authorList>
            <person name="Zheng L."/>
            <person name="Cash V.L."/>
            <person name="Flint D.H."/>
            <person name="Dean D.R."/>
        </authorList>
    </citation>
    <scope>NUCLEOTIDE SEQUENCE [GENOMIC DNA]</scope>
    <source>
        <strain>ATCC 13705 / OP1 / DSM 366 / NCIMB 11614 / LMG 3878 / UW</strain>
    </source>
</reference>
<reference key="2">
    <citation type="journal article" date="2000" name="J. Am. Chem. Soc.">
        <title>Role of the iscU protein in iron-sulfur cluster biosynthesis: IscS-mediated assembly of a [Fe2S2] cluster in iscU.</title>
        <authorList>
            <person name="Agar J.N."/>
            <person name="Zheng L."/>
            <person name="Cash V.L."/>
            <person name="Dean D.R."/>
            <person name="Johnson M.K."/>
        </authorList>
    </citation>
    <scope>FUNCTION</scope>
    <scope>FE-S CLUSTER-BINDING</scope>
    <scope>INTERACTION WITH ISCS</scope>
    <source>
        <strain>ATCC 13705 / OP1 / DSM 366 / NCIMB 11614 / LMG 3878 / UW</strain>
    </source>
</reference>
<reference key="3">
    <citation type="journal article" date="2000" name="Biochemistry">
        <title>IscU as a scaffold for iron-sulfur cluster biosynthesis: sequential assembly of [2Fe-2S] and [4Fe-4S] clusters in IscU.</title>
        <authorList>
            <person name="Agar J.N."/>
            <person name="Krebs C."/>
            <person name="Frazzon J."/>
            <person name="Huynh B.H."/>
            <person name="Dean D.R."/>
            <person name="Johnson M.K."/>
        </authorList>
    </citation>
    <scope>FUNCTION</scope>
    <scope>FORMATION OF FE-S CLUSTERS</scope>
    <source>
        <strain>ATCC 13705 / OP1 / DSM 366 / NCIMB 11614 / LMG 3878 / UW</strain>
    </source>
</reference>
<name>ISCU_AZOVI</name>
<sequence length="128" mass="13875">MAYSDKVIDHYENPRNVGKLDAQDPDVGTGMVGAPACGDVMRLQIKVNEQGIIEDAKFKTYGCGSAIASSSLATEWMKGRTLEEAETIKNTQIAEELALPPVKIHCSVLAEDAIKAAVRDYKHKKGLV</sequence>
<evidence type="ECO:0000269" key="1">
    <source>
    </source>
</evidence>
<evidence type="ECO:0000269" key="2">
    <source ref="2"/>
</evidence>
<evidence type="ECO:0000305" key="3"/>
<protein>
    <recommendedName>
        <fullName>Iron-sulfur cluster assembly scaffold protein IscU</fullName>
    </recommendedName>
</protein>
<organism>
    <name type="scientific">Azotobacter vinelandii</name>
    <dbReference type="NCBI Taxonomy" id="354"/>
    <lineage>
        <taxon>Bacteria</taxon>
        <taxon>Pseudomonadati</taxon>
        <taxon>Pseudomonadota</taxon>
        <taxon>Gammaproteobacteria</taxon>
        <taxon>Pseudomonadales</taxon>
        <taxon>Pseudomonadaceae</taxon>
        <taxon>Azotobacter</taxon>
    </lineage>
</organism>
<dbReference type="EMBL" id="AF010139">
    <property type="protein sequence ID" value="AAC24473.1"/>
    <property type="molecule type" value="Genomic_DNA"/>
</dbReference>
<dbReference type="PIR" id="T44282">
    <property type="entry name" value="T44282"/>
</dbReference>
<dbReference type="RefSeq" id="WP_012702550.1">
    <property type="nucleotide sequence ID" value="NZ_FPKM01000003.1"/>
</dbReference>
<dbReference type="SMR" id="O31270"/>
<dbReference type="DIP" id="DIP-46128N"/>
<dbReference type="IntAct" id="O31270">
    <property type="interactions" value="1"/>
</dbReference>
<dbReference type="GeneID" id="88186982"/>
<dbReference type="OMA" id="YMTERVR"/>
<dbReference type="GO" id="GO:0005737">
    <property type="term" value="C:cytoplasm"/>
    <property type="evidence" value="ECO:0007669"/>
    <property type="project" value="UniProtKB-ARBA"/>
</dbReference>
<dbReference type="GO" id="GO:0005506">
    <property type="term" value="F:iron ion binding"/>
    <property type="evidence" value="ECO:0007669"/>
    <property type="project" value="InterPro"/>
</dbReference>
<dbReference type="GO" id="GO:0051536">
    <property type="term" value="F:iron-sulfur cluster binding"/>
    <property type="evidence" value="ECO:0007669"/>
    <property type="project" value="InterPro"/>
</dbReference>
<dbReference type="GO" id="GO:0016226">
    <property type="term" value="P:iron-sulfur cluster assembly"/>
    <property type="evidence" value="ECO:0007669"/>
    <property type="project" value="InterPro"/>
</dbReference>
<dbReference type="CDD" id="cd06664">
    <property type="entry name" value="IscU_like"/>
    <property type="match status" value="1"/>
</dbReference>
<dbReference type="FunFam" id="3.90.1010.10:FF:000001">
    <property type="entry name" value="Iron-sulfur cluster assembly scaffold protein IscU"/>
    <property type="match status" value="1"/>
</dbReference>
<dbReference type="Gene3D" id="3.90.1010.10">
    <property type="match status" value="1"/>
</dbReference>
<dbReference type="InterPro" id="IPR011339">
    <property type="entry name" value="ISCU"/>
</dbReference>
<dbReference type="InterPro" id="IPR002871">
    <property type="entry name" value="NIF_FeS_clus_asmbl_NifU_N"/>
</dbReference>
<dbReference type="NCBIfam" id="TIGR01999">
    <property type="entry name" value="iscU"/>
    <property type="match status" value="1"/>
</dbReference>
<dbReference type="PANTHER" id="PTHR10093">
    <property type="entry name" value="IRON-SULFUR CLUSTER ASSEMBLY ENZYME NIFU HOMOLOG"/>
    <property type="match status" value="1"/>
</dbReference>
<dbReference type="Pfam" id="PF01592">
    <property type="entry name" value="NifU_N"/>
    <property type="match status" value="1"/>
</dbReference>
<dbReference type="SUPFAM" id="SSF82649">
    <property type="entry name" value="SufE/NifU"/>
    <property type="match status" value="1"/>
</dbReference>
<accession>O31270</accession>
<feature type="chain" id="PRO_0000428752" description="Iron-sulfur cluster assembly scaffold protein IscU">
    <location>
        <begin position="1"/>
        <end position="128"/>
    </location>
</feature>
<gene>
    <name type="primary">iscU</name>
</gene>
<proteinExistence type="evidence at protein level"/>